<organism>
    <name type="scientific">Pectobacterium carotovorum subsp. carotovorum (strain PC1)</name>
    <dbReference type="NCBI Taxonomy" id="561230"/>
    <lineage>
        <taxon>Bacteria</taxon>
        <taxon>Pseudomonadati</taxon>
        <taxon>Pseudomonadota</taxon>
        <taxon>Gammaproteobacteria</taxon>
        <taxon>Enterobacterales</taxon>
        <taxon>Pectobacteriaceae</taxon>
        <taxon>Pectobacterium</taxon>
    </lineage>
</organism>
<reference key="1">
    <citation type="submission" date="2009-07" db="EMBL/GenBank/DDBJ databases">
        <title>Complete sequence of Pectobacterium carotovorum subsp. carotovorum PC1.</title>
        <authorList>
            <consortium name="US DOE Joint Genome Institute"/>
            <person name="Lucas S."/>
            <person name="Copeland A."/>
            <person name="Lapidus A."/>
            <person name="Glavina del Rio T."/>
            <person name="Tice H."/>
            <person name="Bruce D."/>
            <person name="Goodwin L."/>
            <person name="Pitluck S."/>
            <person name="Munk A.C."/>
            <person name="Brettin T."/>
            <person name="Detter J.C."/>
            <person name="Han C."/>
            <person name="Tapia R."/>
            <person name="Larimer F."/>
            <person name="Land M."/>
            <person name="Hauser L."/>
            <person name="Kyrpides N."/>
            <person name="Mikhailova N."/>
            <person name="Balakrishnan V."/>
            <person name="Glasner J."/>
            <person name="Perna N.T."/>
        </authorList>
    </citation>
    <scope>NUCLEOTIDE SEQUENCE [LARGE SCALE GENOMIC DNA]</scope>
    <source>
        <strain>PC1</strain>
    </source>
</reference>
<gene>
    <name evidence="1" type="primary">xni</name>
    <name evidence="1" type="synonym">ygdG</name>
    <name type="ordered locus">PC1_0930</name>
</gene>
<evidence type="ECO:0000255" key="1">
    <source>
        <dbReference type="HAMAP-Rule" id="MF_01192"/>
    </source>
</evidence>
<sequence>MPVHLLIVDALNLIRRIHAVQGSPCITACQHALHQLIQNSQPTHAVAVFDDEDRDTSWRHQLLPDYKAGRTPMPDNLKQELPQIKAAFAAAGVASWHSPGNEADDLAATLATKLSSAGHQATIVSTDKGYCQLLAPHIQIRDYFQKRWLDLPFVEQEFGVSPQQLTDYWGLAGISSSKIPGVAGIGPKSAAQLLQQAGSLEALYQQLDGVPEKWRKKLEQHKEMALVSRQIATLRTDLTLNGNLQQLRLPVQSVAQSDPH</sequence>
<proteinExistence type="inferred from homology"/>
<accession>C6DAH2</accession>
<feature type="chain" id="PRO_1000213797" description="Flap endonuclease Xni">
    <location>
        <begin position="1"/>
        <end position="260"/>
    </location>
</feature>
<feature type="domain" description="5'-3' exonuclease" evidence="1">
    <location>
        <begin position="160"/>
        <end position="249"/>
    </location>
</feature>
<feature type="region of interest" description="Interaction with DNA" evidence="1">
    <location>
        <begin position="184"/>
        <end position="189"/>
    </location>
</feature>
<feature type="binding site" evidence="1">
    <location>
        <position position="104"/>
    </location>
    <ligand>
        <name>Mg(2+)</name>
        <dbReference type="ChEBI" id="CHEBI:18420"/>
    </ligand>
</feature>
<feature type="binding site" evidence="1">
    <location>
        <position position="171"/>
    </location>
    <ligand>
        <name>K(+)</name>
        <dbReference type="ChEBI" id="CHEBI:29103"/>
    </ligand>
</feature>
<feature type="binding site" evidence="1">
    <location>
        <position position="172"/>
    </location>
    <ligand>
        <name>K(+)</name>
        <dbReference type="ChEBI" id="CHEBI:29103"/>
    </ligand>
</feature>
<feature type="binding site" evidence="1">
    <location>
        <position position="180"/>
    </location>
    <ligand>
        <name>K(+)</name>
        <dbReference type="ChEBI" id="CHEBI:29103"/>
    </ligand>
</feature>
<feature type="binding site" evidence="1">
    <location>
        <position position="182"/>
    </location>
    <ligand>
        <name>K(+)</name>
        <dbReference type="ChEBI" id="CHEBI:29103"/>
    </ligand>
</feature>
<feature type="binding site" evidence="1">
    <location>
        <position position="185"/>
    </location>
    <ligand>
        <name>K(+)</name>
        <dbReference type="ChEBI" id="CHEBI:29103"/>
    </ligand>
</feature>
<protein>
    <recommendedName>
        <fullName evidence="1">Flap endonuclease Xni</fullName>
        <shortName evidence="1">FEN</shortName>
        <ecNumber evidence="1">3.1.-.-</ecNumber>
    </recommendedName>
</protein>
<dbReference type="EC" id="3.1.-.-" evidence="1"/>
<dbReference type="EMBL" id="CP001657">
    <property type="protein sequence ID" value="ACT11980.1"/>
    <property type="molecule type" value="Genomic_DNA"/>
</dbReference>
<dbReference type="RefSeq" id="WP_012773620.1">
    <property type="nucleotide sequence ID" value="NC_012917.1"/>
</dbReference>
<dbReference type="SMR" id="C6DAH2"/>
<dbReference type="STRING" id="561230.PC1_0930"/>
<dbReference type="GeneID" id="67795293"/>
<dbReference type="KEGG" id="pct:PC1_0930"/>
<dbReference type="eggNOG" id="COG0258">
    <property type="taxonomic scope" value="Bacteria"/>
</dbReference>
<dbReference type="HOGENOM" id="CLU_004675_1_2_6"/>
<dbReference type="OrthoDB" id="8070997at2"/>
<dbReference type="Proteomes" id="UP000002736">
    <property type="component" value="Chromosome"/>
</dbReference>
<dbReference type="GO" id="GO:0008409">
    <property type="term" value="F:5'-3' exonuclease activity"/>
    <property type="evidence" value="ECO:0007669"/>
    <property type="project" value="InterPro"/>
</dbReference>
<dbReference type="GO" id="GO:0017108">
    <property type="term" value="F:5'-flap endonuclease activity"/>
    <property type="evidence" value="ECO:0007669"/>
    <property type="project" value="UniProtKB-UniRule"/>
</dbReference>
<dbReference type="GO" id="GO:0003677">
    <property type="term" value="F:DNA binding"/>
    <property type="evidence" value="ECO:0007669"/>
    <property type="project" value="UniProtKB-UniRule"/>
</dbReference>
<dbReference type="GO" id="GO:0000287">
    <property type="term" value="F:magnesium ion binding"/>
    <property type="evidence" value="ECO:0007669"/>
    <property type="project" value="UniProtKB-UniRule"/>
</dbReference>
<dbReference type="GO" id="GO:0030955">
    <property type="term" value="F:potassium ion binding"/>
    <property type="evidence" value="ECO:0007669"/>
    <property type="project" value="UniProtKB-UniRule"/>
</dbReference>
<dbReference type="GO" id="GO:0033567">
    <property type="term" value="P:DNA replication, Okazaki fragment processing"/>
    <property type="evidence" value="ECO:0007669"/>
    <property type="project" value="UniProtKB-UniRule"/>
</dbReference>
<dbReference type="CDD" id="cd09898">
    <property type="entry name" value="H3TH_53EXO"/>
    <property type="match status" value="1"/>
</dbReference>
<dbReference type="CDD" id="cd09859">
    <property type="entry name" value="PIN_53EXO"/>
    <property type="match status" value="1"/>
</dbReference>
<dbReference type="FunFam" id="1.10.150.20:FF:000003">
    <property type="entry name" value="DNA polymerase I"/>
    <property type="match status" value="1"/>
</dbReference>
<dbReference type="FunFam" id="3.40.50.1010:FF:000011">
    <property type="entry name" value="Flap endonuclease Xni"/>
    <property type="match status" value="1"/>
</dbReference>
<dbReference type="Gene3D" id="1.10.150.20">
    <property type="entry name" value="5' to 3' exonuclease, C-terminal subdomain"/>
    <property type="match status" value="1"/>
</dbReference>
<dbReference type="Gene3D" id="3.40.50.1010">
    <property type="entry name" value="5'-nuclease"/>
    <property type="match status" value="1"/>
</dbReference>
<dbReference type="HAMAP" id="MF_01192">
    <property type="entry name" value="Xni"/>
    <property type="match status" value="1"/>
</dbReference>
<dbReference type="InterPro" id="IPR020046">
    <property type="entry name" value="5-3_exonucl_a-hlix_arch_N"/>
</dbReference>
<dbReference type="InterPro" id="IPR002421">
    <property type="entry name" value="5-3_exonuclease"/>
</dbReference>
<dbReference type="InterPro" id="IPR036279">
    <property type="entry name" value="5-3_exonuclease_C_sf"/>
</dbReference>
<dbReference type="InterPro" id="IPR020045">
    <property type="entry name" value="DNA_polI_H3TH"/>
</dbReference>
<dbReference type="InterPro" id="IPR038969">
    <property type="entry name" value="FEN"/>
</dbReference>
<dbReference type="InterPro" id="IPR008918">
    <property type="entry name" value="HhH2"/>
</dbReference>
<dbReference type="InterPro" id="IPR029060">
    <property type="entry name" value="PIN-like_dom_sf"/>
</dbReference>
<dbReference type="InterPro" id="IPR022895">
    <property type="entry name" value="Xni"/>
</dbReference>
<dbReference type="NCBIfam" id="NF007017">
    <property type="entry name" value="PRK09482.1"/>
    <property type="match status" value="1"/>
</dbReference>
<dbReference type="PANTHER" id="PTHR42646:SF2">
    <property type="entry name" value="5'-3' EXONUCLEASE FAMILY PROTEIN"/>
    <property type="match status" value="1"/>
</dbReference>
<dbReference type="PANTHER" id="PTHR42646">
    <property type="entry name" value="FLAP ENDONUCLEASE XNI"/>
    <property type="match status" value="1"/>
</dbReference>
<dbReference type="Pfam" id="PF01367">
    <property type="entry name" value="5_3_exonuc"/>
    <property type="match status" value="1"/>
</dbReference>
<dbReference type="Pfam" id="PF02739">
    <property type="entry name" value="5_3_exonuc_N"/>
    <property type="match status" value="1"/>
</dbReference>
<dbReference type="SMART" id="SM00475">
    <property type="entry name" value="53EXOc"/>
    <property type="match status" value="1"/>
</dbReference>
<dbReference type="SMART" id="SM00279">
    <property type="entry name" value="HhH2"/>
    <property type="match status" value="1"/>
</dbReference>
<dbReference type="SUPFAM" id="SSF47807">
    <property type="entry name" value="5' to 3' exonuclease, C-terminal subdomain"/>
    <property type="match status" value="1"/>
</dbReference>
<dbReference type="SUPFAM" id="SSF88723">
    <property type="entry name" value="PIN domain-like"/>
    <property type="match status" value="1"/>
</dbReference>
<comment type="function">
    <text evidence="1">Has flap endonuclease activity. During DNA replication, flap endonucleases cleave the 5'-overhanging flap structure that is generated by displacement synthesis when DNA polymerase encounters the 5'-end of a downstream Okazaki fragment.</text>
</comment>
<comment type="cofactor">
    <cofactor evidence="1">
        <name>Mg(2+)</name>
        <dbReference type="ChEBI" id="CHEBI:18420"/>
    </cofactor>
    <text evidence="1">Binds 2 Mg(2+) per subunit. Only one magnesium ion has a direct interaction with the protein, the other interactions are indirect.</text>
</comment>
<comment type="cofactor">
    <cofactor evidence="1">
        <name>K(+)</name>
        <dbReference type="ChEBI" id="CHEBI:29103"/>
    </cofactor>
    <text evidence="1">Binds 1 K(+) per subunit. The potassium ion strongly increases the affinity for DNA.</text>
</comment>
<comment type="similarity">
    <text evidence="1">Belongs to the Xni family.</text>
</comment>
<name>XNI_PECCP</name>
<keyword id="KW-0238">DNA-binding</keyword>
<keyword id="KW-0255">Endonuclease</keyword>
<keyword id="KW-0378">Hydrolase</keyword>
<keyword id="KW-0460">Magnesium</keyword>
<keyword id="KW-0479">Metal-binding</keyword>
<keyword id="KW-0540">Nuclease</keyword>
<keyword id="KW-0630">Potassium</keyword>